<sequence length="546" mass="58945">MPPPHVRAWYSYAFAAEVFSSYPSGNIPANHFGTCDGKALQSSDPRGMDRYSFVQSSSMYVKSIAVACQAICIISIGPLADIAYWRKRLLLTFAYSGSLSGILFLLFPPLPYAWTPIMAAILNIVGNATYSTSIVCSNAFLPGLAKEDVDVQKAWEEATSEGLQDGLRDVHEDTDEENTGSVSREDEATHLLPDRLIPAVCAISTQDLALSDPLAKLIEPSNAKKHYESRLSLTTSRLSSTGTAIGFFSGVSVLTLLLIPVTALGGSTFSMRLAIGLSGVWWALFTVPTCIGLPGGAPGHGSDFSASQVKKAWVKIGKMVAPKQIHQLPNLYIFLLAWIFLSDGFHTTTYAAILYASSVLSMSAPKIILVGILVQLAAVVSSVLVPRVQRRLSTTSSKPVTNYKVLLAGVVAAAFIPVYTCAGLVLPFGGLRSEGEMYVLAVWFGLVFGPFLSYSRAVYAELIPPGHESTFFSLFAFTDKSASFIGPAAVGLISDLTGNIRYGFLFLLVMLVVPIPVLGRVAVERGRREAVEWAERSRKEMSDERV</sequence>
<name>ATG22_CRYNB</name>
<proteinExistence type="inferred from homology"/>
<accession>P0CM33</accession>
<accession>Q55QA3</accession>
<accession>Q5KFW2</accession>
<organism>
    <name type="scientific">Cryptococcus neoformans var. neoformans serotype D (strain B-3501A)</name>
    <name type="common">Filobasidiella neoformans</name>
    <dbReference type="NCBI Taxonomy" id="283643"/>
    <lineage>
        <taxon>Eukaryota</taxon>
        <taxon>Fungi</taxon>
        <taxon>Dikarya</taxon>
        <taxon>Basidiomycota</taxon>
        <taxon>Agaricomycotina</taxon>
        <taxon>Tremellomycetes</taxon>
        <taxon>Tremellales</taxon>
        <taxon>Cryptococcaceae</taxon>
        <taxon>Cryptococcus</taxon>
        <taxon>Cryptococcus neoformans species complex</taxon>
    </lineage>
</organism>
<gene>
    <name type="primary">ATG22</name>
    <name type="ordered locus">CNBF4340</name>
</gene>
<comment type="function">
    <text evidence="1">Vacuolar effluxer which mediate the efflux of amino acids resulting from autophagic degradation. The release of autophagic amino acids allows the maintenance of protein synthesis and viability during nitrogen starvation (By similarity).</text>
</comment>
<comment type="subcellular location">
    <subcellularLocation>
        <location evidence="1">Vacuole membrane</location>
        <topology evidence="1">Multi-pass membrane protein</topology>
    </subcellularLocation>
    <text evidence="1">Vacuole and punctate structures.</text>
</comment>
<comment type="similarity">
    <text evidence="4">Belongs to the ATG22 family.</text>
</comment>
<dbReference type="EMBL" id="AAEY01000032">
    <property type="protein sequence ID" value="EAL20108.1"/>
    <property type="molecule type" value="Genomic_DNA"/>
</dbReference>
<dbReference type="RefSeq" id="XP_774755.1">
    <property type="nucleotide sequence ID" value="XM_769662.1"/>
</dbReference>
<dbReference type="GeneID" id="4936986"/>
<dbReference type="KEGG" id="cnb:CNBF4340"/>
<dbReference type="VEuPathDB" id="FungiDB:CNBF4340"/>
<dbReference type="HOGENOM" id="CLU_017518_1_0_1"/>
<dbReference type="OrthoDB" id="5097at5206"/>
<dbReference type="GO" id="GO:0005774">
    <property type="term" value="C:vacuolar membrane"/>
    <property type="evidence" value="ECO:0007669"/>
    <property type="project" value="UniProtKB-SubCell"/>
</dbReference>
<dbReference type="GO" id="GO:0032974">
    <property type="term" value="P:amino acid transmembrane export from vacuole"/>
    <property type="evidence" value="ECO:0007669"/>
    <property type="project" value="InterPro"/>
</dbReference>
<dbReference type="GO" id="GO:0006914">
    <property type="term" value="P:autophagy"/>
    <property type="evidence" value="ECO:0007669"/>
    <property type="project" value="UniProtKB-KW"/>
</dbReference>
<dbReference type="CDD" id="cd17483">
    <property type="entry name" value="MFS_Atg22_like"/>
    <property type="match status" value="1"/>
</dbReference>
<dbReference type="FunFam" id="1.20.1250.20:FF:000817">
    <property type="entry name" value="Autophagy-related protein 22"/>
    <property type="match status" value="1"/>
</dbReference>
<dbReference type="Gene3D" id="1.20.1250.20">
    <property type="entry name" value="MFS general substrate transporter like domains"/>
    <property type="match status" value="1"/>
</dbReference>
<dbReference type="InterPro" id="IPR044738">
    <property type="entry name" value="Atg22"/>
</dbReference>
<dbReference type="InterPro" id="IPR024671">
    <property type="entry name" value="Atg22-like"/>
</dbReference>
<dbReference type="InterPro" id="IPR050495">
    <property type="entry name" value="ATG22/LtaA_families"/>
</dbReference>
<dbReference type="InterPro" id="IPR036259">
    <property type="entry name" value="MFS_trans_sf"/>
</dbReference>
<dbReference type="PANTHER" id="PTHR23519">
    <property type="entry name" value="AUTOPHAGY-RELATED PROTEIN 22"/>
    <property type="match status" value="1"/>
</dbReference>
<dbReference type="PANTHER" id="PTHR23519:SF1">
    <property type="entry name" value="AUTOPHAGY-RELATED PROTEIN 22"/>
    <property type="match status" value="1"/>
</dbReference>
<dbReference type="Pfam" id="PF11700">
    <property type="entry name" value="ATG22"/>
    <property type="match status" value="1"/>
</dbReference>
<dbReference type="SUPFAM" id="SSF103473">
    <property type="entry name" value="MFS general substrate transporter"/>
    <property type="match status" value="1"/>
</dbReference>
<reference key="1">
    <citation type="journal article" date="2005" name="Science">
        <title>The genome of the basidiomycetous yeast and human pathogen Cryptococcus neoformans.</title>
        <authorList>
            <person name="Loftus B.J."/>
            <person name="Fung E."/>
            <person name="Roncaglia P."/>
            <person name="Rowley D."/>
            <person name="Amedeo P."/>
            <person name="Bruno D."/>
            <person name="Vamathevan J."/>
            <person name="Miranda M."/>
            <person name="Anderson I.J."/>
            <person name="Fraser J.A."/>
            <person name="Allen J.E."/>
            <person name="Bosdet I.E."/>
            <person name="Brent M.R."/>
            <person name="Chiu R."/>
            <person name="Doering T.L."/>
            <person name="Donlin M.J."/>
            <person name="D'Souza C.A."/>
            <person name="Fox D.S."/>
            <person name="Grinberg V."/>
            <person name="Fu J."/>
            <person name="Fukushima M."/>
            <person name="Haas B.J."/>
            <person name="Huang J.C."/>
            <person name="Janbon G."/>
            <person name="Jones S.J.M."/>
            <person name="Koo H.L."/>
            <person name="Krzywinski M.I."/>
            <person name="Kwon-Chung K.J."/>
            <person name="Lengeler K.B."/>
            <person name="Maiti R."/>
            <person name="Marra M.A."/>
            <person name="Marra R.E."/>
            <person name="Mathewson C.A."/>
            <person name="Mitchell T.G."/>
            <person name="Pertea M."/>
            <person name="Riggs F.R."/>
            <person name="Salzberg S.L."/>
            <person name="Schein J.E."/>
            <person name="Shvartsbeyn A."/>
            <person name="Shin H."/>
            <person name="Shumway M."/>
            <person name="Specht C.A."/>
            <person name="Suh B.B."/>
            <person name="Tenney A."/>
            <person name="Utterback T.R."/>
            <person name="Wickes B.L."/>
            <person name="Wortman J.R."/>
            <person name="Wye N.H."/>
            <person name="Kronstad J.W."/>
            <person name="Lodge J.K."/>
            <person name="Heitman J."/>
            <person name="Davis R.W."/>
            <person name="Fraser C.M."/>
            <person name="Hyman R.W."/>
        </authorList>
    </citation>
    <scope>NUCLEOTIDE SEQUENCE [LARGE SCALE GENOMIC DNA]</scope>
    <source>
        <strain>B-3501A</strain>
    </source>
</reference>
<feature type="chain" id="PRO_0000410018" description="Autophagy-related protein 22">
    <location>
        <begin position="1"/>
        <end position="546"/>
    </location>
</feature>
<feature type="transmembrane region" description="Helical" evidence="2">
    <location>
        <begin position="64"/>
        <end position="84"/>
    </location>
</feature>
<feature type="transmembrane region" description="Helical" evidence="2">
    <location>
        <begin position="102"/>
        <end position="122"/>
    </location>
</feature>
<feature type="transmembrane region" description="Helical" evidence="2">
    <location>
        <begin position="124"/>
        <end position="144"/>
    </location>
</feature>
<feature type="transmembrane region" description="Helical" evidence="2">
    <location>
        <begin position="244"/>
        <end position="264"/>
    </location>
</feature>
<feature type="transmembrane region" description="Helical" evidence="2">
    <location>
        <begin position="273"/>
        <end position="293"/>
    </location>
</feature>
<feature type="transmembrane region" description="Helical" evidence="2">
    <location>
        <begin position="333"/>
        <end position="353"/>
    </location>
</feature>
<feature type="transmembrane region" description="Helical" evidence="2">
    <location>
        <begin position="365"/>
        <end position="385"/>
    </location>
</feature>
<feature type="transmembrane region" description="Helical" evidence="2">
    <location>
        <begin position="405"/>
        <end position="425"/>
    </location>
</feature>
<feature type="transmembrane region" description="Helical" evidence="2">
    <location>
        <begin position="435"/>
        <end position="455"/>
    </location>
</feature>
<feature type="transmembrane region" description="Helical" evidence="2">
    <location>
        <begin position="473"/>
        <end position="493"/>
    </location>
</feature>
<feature type="transmembrane region" description="Helical" evidence="2">
    <location>
        <begin position="503"/>
        <end position="523"/>
    </location>
</feature>
<feature type="region of interest" description="Disordered" evidence="3">
    <location>
        <begin position="160"/>
        <end position="185"/>
    </location>
</feature>
<protein>
    <recommendedName>
        <fullName>Autophagy-related protein 22</fullName>
    </recommendedName>
</protein>
<evidence type="ECO:0000250" key="1"/>
<evidence type="ECO:0000255" key="2"/>
<evidence type="ECO:0000256" key="3">
    <source>
        <dbReference type="SAM" id="MobiDB-lite"/>
    </source>
</evidence>
<evidence type="ECO:0000305" key="4"/>
<keyword id="KW-0029">Amino-acid transport</keyword>
<keyword id="KW-0072">Autophagy</keyword>
<keyword id="KW-0472">Membrane</keyword>
<keyword id="KW-0812">Transmembrane</keyword>
<keyword id="KW-1133">Transmembrane helix</keyword>
<keyword id="KW-0813">Transport</keyword>
<keyword id="KW-0926">Vacuole</keyword>